<feature type="chain" id="PRO_0000405920" description="Phosphatidylethanolamine N-methyltransferase">
    <location>
        <begin position="1"/>
        <end position="976"/>
    </location>
</feature>
<feature type="topological domain" description="Lumenal" evidence="1">
    <location>
        <begin position="1"/>
        <end position="80"/>
    </location>
</feature>
<feature type="transmembrane region" description="Helical" evidence="1">
    <location>
        <begin position="81"/>
        <end position="101"/>
    </location>
</feature>
<feature type="topological domain" description="Cytoplasmic" evidence="1">
    <location>
        <begin position="102"/>
        <end position="104"/>
    </location>
</feature>
<feature type="transmembrane region" description="Helical" evidence="1">
    <location>
        <begin position="105"/>
        <end position="125"/>
    </location>
</feature>
<feature type="topological domain" description="Lumenal" evidence="1">
    <location>
        <begin position="126"/>
        <end position="190"/>
    </location>
</feature>
<feature type="transmembrane region" description="Helical" evidence="1">
    <location>
        <begin position="191"/>
        <end position="211"/>
    </location>
</feature>
<feature type="topological domain" description="Cytoplasmic" evidence="1">
    <location>
        <begin position="212"/>
        <end position="218"/>
    </location>
</feature>
<feature type="transmembrane region" description="Helical" evidence="1">
    <location>
        <begin position="219"/>
        <end position="239"/>
    </location>
</feature>
<feature type="topological domain" description="Lumenal" evidence="1">
    <location>
        <begin position="240"/>
        <end position="272"/>
    </location>
</feature>
<feature type="transmembrane region" description="Helical" evidence="1">
    <location>
        <begin position="273"/>
        <end position="293"/>
    </location>
</feature>
<feature type="topological domain" description="Cytoplasmic" evidence="1">
    <location>
        <begin position="294"/>
        <end position="295"/>
    </location>
</feature>
<feature type="transmembrane region" description="Helical" evidence="1">
    <location>
        <begin position="296"/>
        <end position="316"/>
    </location>
</feature>
<feature type="topological domain" description="Lumenal" evidence="1">
    <location>
        <begin position="317"/>
        <end position="388"/>
    </location>
</feature>
<feature type="transmembrane region" description="Helical" evidence="1">
    <location>
        <begin position="389"/>
        <end position="409"/>
    </location>
</feature>
<feature type="topological domain" description="Cytoplasmic" evidence="1">
    <location>
        <position position="410"/>
    </location>
</feature>
<feature type="transmembrane region" description="Helical" evidence="1">
    <location>
        <begin position="411"/>
        <end position="431"/>
    </location>
</feature>
<feature type="topological domain" description="Lumenal" evidence="1">
    <location>
        <begin position="432"/>
        <end position="464"/>
    </location>
</feature>
<feature type="transmembrane region" description="Helical" evidence="1">
    <location>
        <begin position="465"/>
        <end position="485"/>
    </location>
</feature>
<feature type="topological domain" description="Cytoplasmic" evidence="1">
    <location>
        <begin position="486"/>
        <end position="487"/>
    </location>
</feature>
<feature type="transmembrane region" description="Helical" evidence="1">
    <location>
        <begin position="488"/>
        <end position="508"/>
    </location>
</feature>
<feature type="topological domain" description="Lumenal" evidence="1">
    <location>
        <begin position="509"/>
        <end position="567"/>
    </location>
</feature>
<feature type="transmembrane region" description="Helical" evidence="1">
    <location>
        <begin position="568"/>
        <end position="588"/>
    </location>
</feature>
<feature type="topological domain" description="Cytoplasmic" evidence="1">
    <location>
        <begin position="589"/>
        <end position="976"/>
    </location>
</feature>
<feature type="region of interest" description="Disordered" evidence="2">
    <location>
        <begin position="1"/>
        <end position="36"/>
    </location>
</feature>
<feature type="region of interest" description="Disordered" evidence="2">
    <location>
        <begin position="326"/>
        <end position="366"/>
    </location>
</feature>
<feature type="region of interest" description="Disordered" evidence="2">
    <location>
        <begin position="780"/>
        <end position="810"/>
    </location>
</feature>
<feature type="compositionally biased region" description="Basic and acidic residues" evidence="2">
    <location>
        <begin position="1"/>
        <end position="27"/>
    </location>
</feature>
<feature type="compositionally biased region" description="Basic and acidic residues" evidence="2">
    <location>
        <begin position="343"/>
        <end position="353"/>
    </location>
</feature>
<feature type="compositionally biased region" description="Low complexity" evidence="2">
    <location>
        <begin position="787"/>
        <end position="807"/>
    </location>
</feature>
<dbReference type="EC" id="2.1.1.17" evidence="1"/>
<dbReference type="EMBL" id="ACYE01000362">
    <property type="protein sequence ID" value="EFE38964.1"/>
    <property type="molecule type" value="Genomic_DNA"/>
</dbReference>
<dbReference type="RefSeq" id="XP_003019609.1">
    <property type="nucleotide sequence ID" value="XM_003019563.1"/>
</dbReference>
<dbReference type="SMR" id="D4DGR3"/>
<dbReference type="GeneID" id="9578381"/>
<dbReference type="KEGG" id="tve:TRV_06368"/>
<dbReference type="HOGENOM" id="CLU_005987_0_1_1"/>
<dbReference type="OrthoDB" id="2523at34384"/>
<dbReference type="UniPathway" id="UPA00753"/>
<dbReference type="Proteomes" id="UP000008383">
    <property type="component" value="Unassembled WGS sequence"/>
</dbReference>
<dbReference type="GO" id="GO:0005789">
    <property type="term" value="C:endoplasmic reticulum membrane"/>
    <property type="evidence" value="ECO:0007669"/>
    <property type="project" value="UniProtKB-SubCell"/>
</dbReference>
<dbReference type="GO" id="GO:0004608">
    <property type="term" value="F:phosphatidylethanolamine N-methyltransferase activity"/>
    <property type="evidence" value="ECO:0007669"/>
    <property type="project" value="UniProtKB-UniRule"/>
</dbReference>
<dbReference type="GO" id="GO:0032259">
    <property type="term" value="P:methylation"/>
    <property type="evidence" value="ECO:0007669"/>
    <property type="project" value="UniProtKB-KW"/>
</dbReference>
<dbReference type="GO" id="GO:0006656">
    <property type="term" value="P:phosphatidylcholine biosynthetic process"/>
    <property type="evidence" value="ECO:0007669"/>
    <property type="project" value="UniProtKB-UniRule"/>
</dbReference>
<dbReference type="FunFam" id="2.60.40.2840:FF:000006">
    <property type="entry name" value="Phosphatidylethanolamine N-methyltransferase"/>
    <property type="match status" value="1"/>
</dbReference>
<dbReference type="Gene3D" id="2.60.40.2840">
    <property type="match status" value="1"/>
</dbReference>
<dbReference type="HAMAP" id="MF_03217">
    <property type="entry name" value="PEMT"/>
    <property type="match status" value="1"/>
</dbReference>
<dbReference type="InterPro" id="IPR007318">
    <property type="entry name" value="Phopholipid_MeTrfase"/>
</dbReference>
<dbReference type="InterPro" id="IPR016219">
    <property type="entry name" value="Phosphatid-EA_MeTrfase_fun"/>
</dbReference>
<dbReference type="PANTHER" id="PTHR32138">
    <property type="entry name" value="PHOSPHATIDYLETHANOLAMINE N-METHYLTRANSFERASE"/>
    <property type="match status" value="1"/>
</dbReference>
<dbReference type="PANTHER" id="PTHR32138:SF0">
    <property type="entry name" value="PHOSPHATIDYLETHANOLAMINE N-METHYLTRANSFERASE"/>
    <property type="match status" value="1"/>
</dbReference>
<dbReference type="Pfam" id="PF04191">
    <property type="entry name" value="PEMT"/>
    <property type="match status" value="2"/>
</dbReference>
<dbReference type="PIRSF" id="PIRSF000383">
    <property type="entry name" value="PEAMT"/>
    <property type="match status" value="1"/>
</dbReference>
<dbReference type="PROSITE" id="PS51598">
    <property type="entry name" value="SAM_CHO2"/>
    <property type="match status" value="1"/>
</dbReference>
<comment type="function">
    <text evidence="1">Catalyzes the first step of the methylation pathway of phosphatidylcholine biosynthesis, the SAM-dependent methylation of phosphatidylethanolamine (PE) to phosphatidylmonomethylethanolamine (PMME).</text>
</comment>
<comment type="catalytic activity">
    <reaction evidence="1">
        <text>a 1,2-diacyl-sn-glycero-3-phosphoethanolamine + S-adenosyl-L-methionine = a 1,2-diacyl-sn-glycero-3-phospho-N-methylethanolamine + S-adenosyl-L-homocysteine + H(+)</text>
        <dbReference type="Rhea" id="RHEA:11164"/>
        <dbReference type="ChEBI" id="CHEBI:15378"/>
        <dbReference type="ChEBI" id="CHEBI:57856"/>
        <dbReference type="ChEBI" id="CHEBI:59789"/>
        <dbReference type="ChEBI" id="CHEBI:64573"/>
        <dbReference type="ChEBI" id="CHEBI:64612"/>
        <dbReference type="EC" id="2.1.1.17"/>
    </reaction>
</comment>
<comment type="pathway">
    <text evidence="1">Phospholipid metabolism; phosphatidylcholine biosynthesis.</text>
</comment>
<comment type="subcellular location">
    <subcellularLocation>
        <location evidence="1">Endoplasmic reticulum membrane</location>
        <topology evidence="1">Multi-pass membrane protein</topology>
    </subcellularLocation>
</comment>
<comment type="similarity">
    <text evidence="1">Belongs to the class VI-like SAM-binding methyltransferase superfamily. CHO2 family.</text>
</comment>
<reference key="1">
    <citation type="journal article" date="2011" name="Genome Biol.">
        <title>Comparative and functional genomics provide insights into the pathogenicity of dermatophytic fungi.</title>
        <authorList>
            <person name="Burmester A."/>
            <person name="Shelest E."/>
            <person name="Gloeckner G."/>
            <person name="Heddergott C."/>
            <person name="Schindler S."/>
            <person name="Staib P."/>
            <person name="Heidel A."/>
            <person name="Felder M."/>
            <person name="Petzold A."/>
            <person name="Szafranski K."/>
            <person name="Feuermann M."/>
            <person name="Pedruzzi I."/>
            <person name="Priebe S."/>
            <person name="Groth M."/>
            <person name="Winkler R."/>
            <person name="Li W."/>
            <person name="Kniemeyer O."/>
            <person name="Schroeckh V."/>
            <person name="Hertweck C."/>
            <person name="Hube B."/>
            <person name="White T.C."/>
            <person name="Platzer M."/>
            <person name="Guthke R."/>
            <person name="Heitman J."/>
            <person name="Woestemeyer J."/>
            <person name="Zipfel P.F."/>
            <person name="Monod M."/>
            <person name="Brakhage A.A."/>
        </authorList>
    </citation>
    <scope>NUCLEOTIDE SEQUENCE [LARGE SCALE GENOMIC DNA]</scope>
    <source>
        <strain>HKI 0517</strain>
    </source>
</reference>
<protein>
    <recommendedName>
        <fullName evidence="1">Phosphatidylethanolamine N-methyltransferase</fullName>
        <shortName evidence="1">PE methyltransferase</shortName>
        <shortName evidence="1">PEAMT</shortName>
        <shortName evidence="1">PEMT</shortName>
        <ecNumber evidence="1">2.1.1.17</ecNumber>
    </recommendedName>
</protein>
<accession>D4DGR3</accession>
<proteinExistence type="inferred from homology"/>
<evidence type="ECO:0000255" key="1">
    <source>
        <dbReference type="HAMAP-Rule" id="MF_03217"/>
    </source>
</evidence>
<evidence type="ECO:0000256" key="2">
    <source>
        <dbReference type="SAM" id="MobiDB-lite"/>
    </source>
</evidence>
<keyword id="KW-0256">Endoplasmic reticulum</keyword>
<keyword id="KW-0444">Lipid biosynthesis</keyword>
<keyword id="KW-0443">Lipid metabolism</keyword>
<keyword id="KW-0472">Membrane</keyword>
<keyword id="KW-0489">Methyltransferase</keyword>
<keyword id="KW-0594">Phospholipid biosynthesis</keyword>
<keyword id="KW-1208">Phospholipid metabolism</keyword>
<keyword id="KW-0949">S-adenosyl-L-methionine</keyword>
<keyword id="KW-0808">Transferase</keyword>
<keyword id="KW-0812">Transmembrane</keyword>
<keyword id="KW-1133">Transmembrane helix</keyword>
<name>CHO2_TRIVH</name>
<sequence length="976" mass="109544">MARLSGVERPDDSGLRERKARAVEEPVKQPVESADGAAAAAQAKKKTIGRTPDGTAFTVPHTRDMVSQLLSPSEPKNLSDILVLSIIGLHIVLLYLLPSFLRIPIFAVLFLSWRAAYNIGIGWLLHMQSNHSTMVLWARQTKIFVNPATGDNPHPQLYSFIKRELETKIPEDYSFEDAPIEYNTWLVFRRVVDLILMCDFTSYCLFAIACGSRPAEENFLVLILRWVVGLGLVLFNLWVKLDAHRVVKDFAWYWGDFFYLVDQELTFDGVFEMAPHPMYSVGYAGYYGISLMAASYKVLFISILAHAAQFAFLVLVENPHIEKTYNAPPPRKRTIESHAGLAGEEKSSRRPSDSSEMVPPPSPVALPSSTHNLVGVKNLDLHRITDSSIILIQVLFFALTMLTPSTPIYQFFFVLNAAIWRLWYSVGIGYILNCQSHRREWTRHFVKFGETKEEAWNQWKGTYHLSMTLCYASFIAAAWKMYTLPENWGYGLAILKHVLGAGLIALQIWTSVSIYDSLGEFGWFFGDFFFDEAPKLTYSGIYRFLNNPERVLGLAGVWGAALITSSRAMIFLALLSHTLGIAFIQLVERPHMQKLYGRGLRQDAGLVRSIKRSLPPSFKQLHGSVDRILDESIEFIEEVLDTARPKLAAGVTTFVKDTSELFHKYPARITITRIEPDLAGYDMNDYSINVDTSDCITIRDGAEDKSEVLVFEYGSPIKVNWTAPLNHSKRDWVGLYMIGQNPSREVTNVSSWGRWVATNHGSFDSVLSEKGLIASDVVVSKPGTSNTSKKPSVKSGSGKKSSTSTSSHEVASGQMVFSGDKLWWTQGVFEFRYHHNGKHNVMATSRPFEIRIPKFDDGQIPSHVSSNGNGFMTTAIEQALLPIVQNCFDRDPEISPQTAEEPFGCETEGDLKYAKRVVYAVHQMFGIEFATEVVRADGNVQNLAWRICNAKKVLAPYSMRKSNGASTPTGESEEMK</sequence>
<organism>
    <name type="scientific">Trichophyton verrucosum (strain HKI 0517)</name>
    <dbReference type="NCBI Taxonomy" id="663202"/>
    <lineage>
        <taxon>Eukaryota</taxon>
        <taxon>Fungi</taxon>
        <taxon>Dikarya</taxon>
        <taxon>Ascomycota</taxon>
        <taxon>Pezizomycotina</taxon>
        <taxon>Eurotiomycetes</taxon>
        <taxon>Eurotiomycetidae</taxon>
        <taxon>Onygenales</taxon>
        <taxon>Arthrodermataceae</taxon>
        <taxon>Trichophyton</taxon>
    </lineage>
</organism>
<gene>
    <name type="primary">CHO2</name>
    <name type="ORF">TRV_06368</name>
</gene>